<organism>
    <name type="scientific">Schizosaccharomyces pombe (strain 972 / ATCC 24843)</name>
    <name type="common">Fission yeast</name>
    <dbReference type="NCBI Taxonomy" id="284812"/>
    <lineage>
        <taxon>Eukaryota</taxon>
        <taxon>Fungi</taxon>
        <taxon>Dikarya</taxon>
        <taxon>Ascomycota</taxon>
        <taxon>Taphrinomycotina</taxon>
        <taxon>Schizosaccharomycetes</taxon>
        <taxon>Schizosaccharomycetales</taxon>
        <taxon>Schizosaccharomycetaceae</taxon>
        <taxon>Schizosaccharomyces</taxon>
    </lineage>
</organism>
<comment type="function">
    <text evidence="1">Probable E3 ubiquitin-protein ligase which mediates ubiquitination and subsequent proteasomal degradation of target proteins.</text>
</comment>
<comment type="catalytic activity">
    <reaction>
        <text>S-ubiquitinyl-[E2 ubiquitin-conjugating enzyme]-L-cysteine + [acceptor protein]-L-lysine = [E2 ubiquitin-conjugating enzyme]-L-cysteine + N(6)-ubiquitinyl-[acceptor protein]-L-lysine.</text>
        <dbReference type="EC" id="2.3.2.26"/>
    </reaction>
</comment>
<comment type="subcellular location">
    <subcellularLocation>
        <location evidence="5">Cytoplasm</location>
    </subcellularLocation>
    <subcellularLocation>
        <location evidence="5">Nucleus</location>
    </subcellularLocation>
</comment>
<comment type="induction">
    <text evidence="4">By stress.</text>
</comment>
<gene>
    <name type="ORF">SPAC167.07c</name>
    <name type="ORF">SPAC57A7.03c</name>
</gene>
<protein>
    <recommendedName>
        <fullName>Probable E3 ubiquitin protein ligase C167.07c</fullName>
        <ecNumber>2.3.2.26</ecNumber>
    </recommendedName>
    <alternativeName>
        <fullName>HECT-type E3 ubiquitin transferase C167.07c</fullName>
    </alternativeName>
</protein>
<sequence>MPLSFEGTFKAKRNVNLGGKRVSNDRAQLLRKAAMERKNREEERKAENNSVAVQSLSRGFLARRKFKQDFRERWIYKYTKSGRTSIRFNTLEDIKCSISLLVLFAEPDIDLPFVSQVAHNILVWLENLIPLSNGMDDTPKSHLKVKILKVQETLSNSNDSWLWQRFSSLLLNCLVSSINSHRIEGTDTSAETSLLHCLAYVAPYLKSSELSTYYDSVMTFYAQIYPKQNMTNLEDIMSLSLLTPVSSKTDENANSSSAFLFHVLASDCFSSIENCIPPDLIIDKVFSSSLQLSEEACISSLLNLGMIKVFSLAGNCLHLLHTEYKNSSLWKFCSYILDALYVFSGESVNSRIQVVSDVDDDEDDENAFSQNYYSHLQMVAKHFSKNYANQSGIVQRSFAECISSTFITKAFKLVSSNTLQAMSHFYATMIKLFPSNRTSILMYISLVETNEGSLTRSFSRFSWDMFSESPVYQLFHKKFDVQNVLKNDSGYWFQLQLLIDVYSRMLFTMIDDEFHNDKQNPLYPVMAEFCTVLKNLVLGLYWDVQAAKDVDCKSVVDISQLRVSSTSLLQQLYRINSRKQFLPEDFFLMSEYFNLNEFEANALQESELASHAEAEINITYKFDNFSESRPRLNILNNCSFFLPFHFRIHLLQQLLLLDKQANGYAQPFGHLKHAVIRRNRIFDDGFDAFYNFGKLLKGPIRITFVDEHGVVEEGIDGGGLTKEFLTSICKTVFDINYGLFSETKAHLLYPNTHAYAQDVERLRCYEFLGMLIGKCIYEGIQIDAAFASFFVAKWLGHPSYFDDLTSLDPNLYEGLVFLKNYDGDVENDMALNFTVVHEEFGVRNVIDLIPNGSNISVTNENRLQYIHLVSNYYLNARLSRQCRAFTNGFTQIIDPHWLAMFHESEIQILVGGDPVPIDIDDLRRHTVYAGGYEPNSPTIVLFWEVLREFEEEDKRSFVKFVTSVARPPILGFKALMPSFCIRVNGEDETRLPTASTCVNLLKLPMYSTKQTLRDKLLTAVRSGVGFGFS</sequence>
<accession>Q1K9C4</accession>
<name>YFK7_SCHPO</name>
<feature type="chain" id="PRO_0000351435" description="Probable E3 ubiquitin protein ligase C167.07c">
    <location>
        <begin position="1"/>
        <end position="1029"/>
    </location>
</feature>
<feature type="domain" description="IQ" evidence="3">
    <location>
        <begin position="46"/>
        <end position="75"/>
    </location>
</feature>
<feature type="domain" description="HECT" evidence="2">
    <location>
        <begin position="692"/>
        <end position="1029"/>
    </location>
</feature>
<feature type="active site" description="Glycyl thioester intermediate" evidence="2">
    <location>
        <position position="997"/>
    </location>
</feature>
<dbReference type="EC" id="2.3.2.26"/>
<dbReference type="EMBL" id="CU329670">
    <property type="protein sequence ID" value="CAB08761.1"/>
    <property type="molecule type" value="Genomic_DNA"/>
</dbReference>
<dbReference type="RefSeq" id="NP_593378.1">
    <property type="nucleotide sequence ID" value="NM_001018810.2"/>
</dbReference>
<dbReference type="SMR" id="Q1K9C4"/>
<dbReference type="BioGRID" id="279220">
    <property type="interactions" value="14"/>
</dbReference>
<dbReference type="FunCoup" id="Q1K9C4">
    <property type="interactions" value="259"/>
</dbReference>
<dbReference type="STRING" id="284812.Q1K9C4"/>
<dbReference type="iPTMnet" id="Q1K9C4"/>
<dbReference type="PaxDb" id="4896-SPAC167.07c.1"/>
<dbReference type="EnsemblFungi" id="SPAC167.07c.1">
    <property type="protein sequence ID" value="SPAC167.07c.1:pep"/>
    <property type="gene ID" value="SPAC167.07c"/>
</dbReference>
<dbReference type="GeneID" id="2542770"/>
<dbReference type="KEGG" id="spo:2542770"/>
<dbReference type="PomBase" id="SPAC167.07c"/>
<dbReference type="VEuPathDB" id="FungiDB:SPAC167.07c"/>
<dbReference type="eggNOG" id="KOG0942">
    <property type="taxonomic scope" value="Eukaryota"/>
</dbReference>
<dbReference type="HOGENOM" id="CLU_002173_2_1_1"/>
<dbReference type="InParanoid" id="Q1K9C4"/>
<dbReference type="OMA" id="CRAFTNG"/>
<dbReference type="PhylomeDB" id="Q1K9C4"/>
<dbReference type="Reactome" id="R-SPO-983168">
    <property type="pathway name" value="Antigen processing: Ubiquitination &amp; Proteasome degradation"/>
</dbReference>
<dbReference type="PRO" id="PR:Q1K9C4"/>
<dbReference type="Proteomes" id="UP000002485">
    <property type="component" value="Chromosome I"/>
</dbReference>
<dbReference type="GO" id="GO:0005829">
    <property type="term" value="C:cytosol"/>
    <property type="evidence" value="ECO:0007005"/>
    <property type="project" value="PomBase"/>
</dbReference>
<dbReference type="GO" id="GO:0005635">
    <property type="term" value="C:nuclear envelope"/>
    <property type="evidence" value="ECO:0007005"/>
    <property type="project" value="PomBase"/>
</dbReference>
<dbReference type="GO" id="GO:0005634">
    <property type="term" value="C:nucleus"/>
    <property type="evidence" value="ECO:0007005"/>
    <property type="project" value="PomBase"/>
</dbReference>
<dbReference type="GO" id="GO:0061630">
    <property type="term" value="F:ubiquitin protein ligase activity"/>
    <property type="evidence" value="ECO:0000266"/>
    <property type="project" value="PomBase"/>
</dbReference>
<dbReference type="GO" id="GO:0008270">
    <property type="term" value="F:zinc ion binding"/>
    <property type="evidence" value="ECO:0000255"/>
    <property type="project" value="PomBase"/>
</dbReference>
<dbReference type="GO" id="GO:0036503">
    <property type="term" value="P:ERAD pathway"/>
    <property type="evidence" value="ECO:0000266"/>
    <property type="project" value="PomBase"/>
</dbReference>
<dbReference type="GO" id="GO:0000209">
    <property type="term" value="P:protein polyubiquitination"/>
    <property type="evidence" value="ECO:0000318"/>
    <property type="project" value="GO_Central"/>
</dbReference>
<dbReference type="GO" id="GO:0006511">
    <property type="term" value="P:ubiquitin-dependent protein catabolic process"/>
    <property type="evidence" value="ECO:0000318"/>
    <property type="project" value="GO_Central"/>
</dbReference>
<dbReference type="CDD" id="cd00078">
    <property type="entry name" value="HECTc"/>
    <property type="match status" value="1"/>
</dbReference>
<dbReference type="FunFam" id="3.30.2160.10:FF:000002">
    <property type="entry name" value="Putative Ubiquitin-protein ligase E3C"/>
    <property type="match status" value="1"/>
</dbReference>
<dbReference type="FunFam" id="3.30.2410.10:FF:000011">
    <property type="entry name" value="Putative Ubiquitin-protein ligase E3C"/>
    <property type="match status" value="1"/>
</dbReference>
<dbReference type="Gene3D" id="3.30.2160.10">
    <property type="entry name" value="Hect, E3 ligase catalytic domain"/>
    <property type="match status" value="1"/>
</dbReference>
<dbReference type="Gene3D" id="3.30.2410.10">
    <property type="entry name" value="Hect, E3 ligase catalytic domain"/>
    <property type="match status" value="1"/>
</dbReference>
<dbReference type="Gene3D" id="3.90.1750.10">
    <property type="entry name" value="Hect, E3 ligase catalytic domains"/>
    <property type="match status" value="1"/>
</dbReference>
<dbReference type="InterPro" id="IPR044611">
    <property type="entry name" value="E3A/B/C-like"/>
</dbReference>
<dbReference type="InterPro" id="IPR000569">
    <property type="entry name" value="HECT_dom"/>
</dbReference>
<dbReference type="InterPro" id="IPR035983">
    <property type="entry name" value="Hect_E3_ubiquitin_ligase"/>
</dbReference>
<dbReference type="PANTHER" id="PTHR45700">
    <property type="entry name" value="UBIQUITIN-PROTEIN LIGASE E3C"/>
    <property type="match status" value="1"/>
</dbReference>
<dbReference type="PANTHER" id="PTHR45700:SF2">
    <property type="entry name" value="UBIQUITIN-PROTEIN LIGASE E3C"/>
    <property type="match status" value="1"/>
</dbReference>
<dbReference type="Pfam" id="PF00632">
    <property type="entry name" value="HECT"/>
    <property type="match status" value="1"/>
</dbReference>
<dbReference type="SMART" id="SM00119">
    <property type="entry name" value="HECTc"/>
    <property type="match status" value="1"/>
</dbReference>
<dbReference type="SUPFAM" id="SSF56204">
    <property type="entry name" value="Hect, E3 ligase catalytic domain"/>
    <property type="match status" value="1"/>
</dbReference>
<dbReference type="PROSITE" id="PS50237">
    <property type="entry name" value="HECT"/>
    <property type="match status" value="1"/>
</dbReference>
<dbReference type="PROSITE" id="PS50096">
    <property type="entry name" value="IQ"/>
    <property type="match status" value="1"/>
</dbReference>
<evidence type="ECO:0000250" key="1"/>
<evidence type="ECO:0000255" key="2">
    <source>
        <dbReference type="PROSITE-ProRule" id="PRU00104"/>
    </source>
</evidence>
<evidence type="ECO:0000255" key="3">
    <source>
        <dbReference type="PROSITE-ProRule" id="PRU00116"/>
    </source>
</evidence>
<evidence type="ECO:0000269" key="4">
    <source>
    </source>
</evidence>
<evidence type="ECO:0000269" key="5">
    <source>
    </source>
</evidence>
<proteinExistence type="evidence at transcript level"/>
<reference key="1">
    <citation type="journal article" date="2002" name="Nature">
        <title>The genome sequence of Schizosaccharomyces pombe.</title>
        <authorList>
            <person name="Wood V."/>
            <person name="Gwilliam R."/>
            <person name="Rajandream M.A."/>
            <person name="Lyne M.H."/>
            <person name="Lyne R."/>
            <person name="Stewart A."/>
            <person name="Sgouros J.G."/>
            <person name="Peat N."/>
            <person name="Hayles J."/>
            <person name="Baker S.G."/>
            <person name="Basham D."/>
            <person name="Bowman S."/>
            <person name="Brooks K."/>
            <person name="Brown D."/>
            <person name="Brown S."/>
            <person name="Chillingworth T."/>
            <person name="Churcher C.M."/>
            <person name="Collins M."/>
            <person name="Connor R."/>
            <person name="Cronin A."/>
            <person name="Davis P."/>
            <person name="Feltwell T."/>
            <person name="Fraser A."/>
            <person name="Gentles S."/>
            <person name="Goble A."/>
            <person name="Hamlin N."/>
            <person name="Harris D.E."/>
            <person name="Hidalgo J."/>
            <person name="Hodgson G."/>
            <person name="Holroyd S."/>
            <person name="Hornsby T."/>
            <person name="Howarth S."/>
            <person name="Huckle E.J."/>
            <person name="Hunt S."/>
            <person name="Jagels K."/>
            <person name="James K.D."/>
            <person name="Jones L."/>
            <person name="Jones M."/>
            <person name="Leather S."/>
            <person name="McDonald S."/>
            <person name="McLean J."/>
            <person name="Mooney P."/>
            <person name="Moule S."/>
            <person name="Mungall K.L."/>
            <person name="Murphy L.D."/>
            <person name="Niblett D."/>
            <person name="Odell C."/>
            <person name="Oliver K."/>
            <person name="O'Neil S."/>
            <person name="Pearson D."/>
            <person name="Quail M.A."/>
            <person name="Rabbinowitsch E."/>
            <person name="Rutherford K.M."/>
            <person name="Rutter S."/>
            <person name="Saunders D."/>
            <person name="Seeger K."/>
            <person name="Sharp S."/>
            <person name="Skelton J."/>
            <person name="Simmonds M.N."/>
            <person name="Squares R."/>
            <person name="Squares S."/>
            <person name="Stevens K."/>
            <person name="Taylor K."/>
            <person name="Taylor R.G."/>
            <person name="Tivey A."/>
            <person name="Walsh S.V."/>
            <person name="Warren T."/>
            <person name="Whitehead S."/>
            <person name="Woodward J.R."/>
            <person name="Volckaert G."/>
            <person name="Aert R."/>
            <person name="Robben J."/>
            <person name="Grymonprez B."/>
            <person name="Weltjens I."/>
            <person name="Vanstreels E."/>
            <person name="Rieger M."/>
            <person name="Schaefer M."/>
            <person name="Mueller-Auer S."/>
            <person name="Gabel C."/>
            <person name="Fuchs M."/>
            <person name="Duesterhoeft A."/>
            <person name="Fritzc C."/>
            <person name="Holzer E."/>
            <person name="Moestl D."/>
            <person name="Hilbert H."/>
            <person name="Borzym K."/>
            <person name="Langer I."/>
            <person name="Beck A."/>
            <person name="Lehrach H."/>
            <person name="Reinhardt R."/>
            <person name="Pohl T.M."/>
            <person name="Eger P."/>
            <person name="Zimmermann W."/>
            <person name="Wedler H."/>
            <person name="Wambutt R."/>
            <person name="Purnelle B."/>
            <person name="Goffeau A."/>
            <person name="Cadieu E."/>
            <person name="Dreano S."/>
            <person name="Gloux S."/>
            <person name="Lelaure V."/>
            <person name="Mottier S."/>
            <person name="Galibert F."/>
            <person name="Aves S.J."/>
            <person name="Xiang Z."/>
            <person name="Hunt C."/>
            <person name="Moore K."/>
            <person name="Hurst S.M."/>
            <person name="Lucas M."/>
            <person name="Rochet M."/>
            <person name="Gaillardin C."/>
            <person name="Tallada V.A."/>
            <person name="Garzon A."/>
            <person name="Thode G."/>
            <person name="Daga R.R."/>
            <person name="Cruzado L."/>
            <person name="Jimenez J."/>
            <person name="Sanchez M."/>
            <person name="del Rey F."/>
            <person name="Benito J."/>
            <person name="Dominguez A."/>
            <person name="Revuelta J.L."/>
            <person name="Moreno S."/>
            <person name="Armstrong J."/>
            <person name="Forsburg S.L."/>
            <person name="Cerutti L."/>
            <person name="Lowe T."/>
            <person name="McCombie W.R."/>
            <person name="Paulsen I."/>
            <person name="Potashkin J."/>
            <person name="Shpakovski G.V."/>
            <person name="Ussery D."/>
            <person name="Barrell B.G."/>
            <person name="Nurse P."/>
        </authorList>
    </citation>
    <scope>NUCLEOTIDE SEQUENCE [LARGE SCALE GENOMIC DNA]</scope>
    <source>
        <strain>972 / ATCC 24843</strain>
    </source>
</reference>
<reference key="2">
    <citation type="journal article" date="2003" name="Mol. Biol. Cell">
        <title>Global transcriptional responses of fission yeast to environmental stress.</title>
        <authorList>
            <person name="Chen D."/>
            <person name="Toone W.M."/>
            <person name="Mata J."/>
            <person name="Lyne R."/>
            <person name="Burns G."/>
            <person name="Kivinen K."/>
            <person name="Brazma A."/>
            <person name="Jones N."/>
            <person name="Baehler J."/>
        </authorList>
    </citation>
    <scope>INDUCTION</scope>
</reference>
<reference key="3">
    <citation type="journal article" date="2006" name="Nat. Biotechnol.">
        <title>ORFeome cloning and global analysis of protein localization in the fission yeast Schizosaccharomyces pombe.</title>
        <authorList>
            <person name="Matsuyama A."/>
            <person name="Arai R."/>
            <person name="Yashiroda Y."/>
            <person name="Shirai A."/>
            <person name="Kamata A."/>
            <person name="Sekido S."/>
            <person name="Kobayashi Y."/>
            <person name="Hashimoto A."/>
            <person name="Hamamoto M."/>
            <person name="Hiraoka Y."/>
            <person name="Horinouchi S."/>
            <person name="Yoshida M."/>
        </authorList>
    </citation>
    <scope>SUBCELLULAR LOCATION [LARGE SCALE ANALYSIS]</scope>
</reference>
<keyword id="KW-0963">Cytoplasm</keyword>
<keyword id="KW-0539">Nucleus</keyword>
<keyword id="KW-1185">Reference proteome</keyword>
<keyword id="KW-0808">Transferase</keyword>
<keyword id="KW-0833">Ubl conjugation pathway</keyword>